<organism>
    <name type="scientific">Thermobifida fusca (strain YX)</name>
    <dbReference type="NCBI Taxonomy" id="269800"/>
    <lineage>
        <taxon>Bacteria</taxon>
        <taxon>Bacillati</taxon>
        <taxon>Actinomycetota</taxon>
        <taxon>Actinomycetes</taxon>
        <taxon>Streptosporangiales</taxon>
        <taxon>Nocardiopsidaceae</taxon>
        <taxon>Thermobifida</taxon>
    </lineage>
</organism>
<dbReference type="EC" id="2.4.2.7" evidence="1"/>
<dbReference type="EMBL" id="CP000088">
    <property type="protein sequence ID" value="AAZ56124.1"/>
    <property type="molecule type" value="Genomic_DNA"/>
</dbReference>
<dbReference type="RefSeq" id="WP_011292514.1">
    <property type="nucleotide sequence ID" value="NC_007333.1"/>
</dbReference>
<dbReference type="SMR" id="Q47N45"/>
<dbReference type="STRING" id="269800.Tfu_2091"/>
<dbReference type="KEGG" id="tfu:Tfu_2091"/>
<dbReference type="eggNOG" id="COG0503">
    <property type="taxonomic scope" value="Bacteria"/>
</dbReference>
<dbReference type="HOGENOM" id="CLU_063339_3_0_11"/>
<dbReference type="OrthoDB" id="9803963at2"/>
<dbReference type="UniPathway" id="UPA00588">
    <property type="reaction ID" value="UER00646"/>
</dbReference>
<dbReference type="GO" id="GO:0005737">
    <property type="term" value="C:cytoplasm"/>
    <property type="evidence" value="ECO:0007669"/>
    <property type="project" value="UniProtKB-SubCell"/>
</dbReference>
<dbReference type="GO" id="GO:0002055">
    <property type="term" value="F:adenine binding"/>
    <property type="evidence" value="ECO:0007669"/>
    <property type="project" value="TreeGrafter"/>
</dbReference>
<dbReference type="GO" id="GO:0003999">
    <property type="term" value="F:adenine phosphoribosyltransferase activity"/>
    <property type="evidence" value="ECO:0007669"/>
    <property type="project" value="UniProtKB-UniRule"/>
</dbReference>
<dbReference type="GO" id="GO:0016208">
    <property type="term" value="F:AMP binding"/>
    <property type="evidence" value="ECO:0007669"/>
    <property type="project" value="TreeGrafter"/>
</dbReference>
<dbReference type="GO" id="GO:0006168">
    <property type="term" value="P:adenine salvage"/>
    <property type="evidence" value="ECO:0007669"/>
    <property type="project" value="InterPro"/>
</dbReference>
<dbReference type="GO" id="GO:0044209">
    <property type="term" value="P:AMP salvage"/>
    <property type="evidence" value="ECO:0007669"/>
    <property type="project" value="UniProtKB-UniRule"/>
</dbReference>
<dbReference type="GO" id="GO:0006166">
    <property type="term" value="P:purine ribonucleoside salvage"/>
    <property type="evidence" value="ECO:0007669"/>
    <property type="project" value="UniProtKB-KW"/>
</dbReference>
<dbReference type="CDD" id="cd06223">
    <property type="entry name" value="PRTases_typeI"/>
    <property type="match status" value="1"/>
</dbReference>
<dbReference type="FunFam" id="3.40.50.2020:FF:000021">
    <property type="entry name" value="Adenine phosphoribosyltransferase"/>
    <property type="match status" value="1"/>
</dbReference>
<dbReference type="Gene3D" id="3.40.50.2020">
    <property type="match status" value="1"/>
</dbReference>
<dbReference type="HAMAP" id="MF_00004">
    <property type="entry name" value="Aden_phosphoribosyltr"/>
    <property type="match status" value="1"/>
</dbReference>
<dbReference type="InterPro" id="IPR005764">
    <property type="entry name" value="Ade_phspho_trans"/>
</dbReference>
<dbReference type="InterPro" id="IPR000836">
    <property type="entry name" value="PRibTrfase_dom"/>
</dbReference>
<dbReference type="InterPro" id="IPR029057">
    <property type="entry name" value="PRTase-like"/>
</dbReference>
<dbReference type="InterPro" id="IPR050054">
    <property type="entry name" value="UPRTase/APRTase"/>
</dbReference>
<dbReference type="NCBIfam" id="TIGR01090">
    <property type="entry name" value="apt"/>
    <property type="match status" value="1"/>
</dbReference>
<dbReference type="NCBIfam" id="NF002634">
    <property type="entry name" value="PRK02304.1-3"/>
    <property type="match status" value="1"/>
</dbReference>
<dbReference type="NCBIfam" id="NF002636">
    <property type="entry name" value="PRK02304.1-5"/>
    <property type="match status" value="1"/>
</dbReference>
<dbReference type="PANTHER" id="PTHR32315">
    <property type="entry name" value="ADENINE PHOSPHORIBOSYLTRANSFERASE"/>
    <property type="match status" value="1"/>
</dbReference>
<dbReference type="PANTHER" id="PTHR32315:SF3">
    <property type="entry name" value="ADENINE PHOSPHORIBOSYLTRANSFERASE"/>
    <property type="match status" value="1"/>
</dbReference>
<dbReference type="Pfam" id="PF00156">
    <property type="entry name" value="Pribosyltran"/>
    <property type="match status" value="1"/>
</dbReference>
<dbReference type="SUPFAM" id="SSF53271">
    <property type="entry name" value="PRTase-like"/>
    <property type="match status" value="1"/>
</dbReference>
<dbReference type="PROSITE" id="PS00103">
    <property type="entry name" value="PUR_PYR_PR_TRANSFER"/>
    <property type="match status" value="1"/>
</dbReference>
<gene>
    <name evidence="1" type="primary">apt</name>
    <name type="ordered locus">Tfu_2091</name>
</gene>
<evidence type="ECO:0000255" key="1">
    <source>
        <dbReference type="HAMAP-Rule" id="MF_00004"/>
    </source>
</evidence>
<sequence>MSTDVSTLIDRYVRDIPDYPQPGVVFKDITPLLSHPTALRTAIDALAEPLLGSEIDLVAGLEARGFIFAAPVAVRLGAGFVPLRKAGKLPAETLAESYDLEYGTATVEMHADAVPPGSRVLIVDDVLATGGTGRAAVDLIRRAGGTVVGLSVLLELGFLKGREKLADVELRALATV</sequence>
<feature type="chain" id="PRO_1000000367" description="Adenine phosphoribosyltransferase">
    <location>
        <begin position="1"/>
        <end position="176"/>
    </location>
</feature>
<accession>Q47N45</accession>
<keyword id="KW-0963">Cytoplasm</keyword>
<keyword id="KW-0328">Glycosyltransferase</keyword>
<keyword id="KW-0660">Purine salvage</keyword>
<keyword id="KW-0808">Transferase</keyword>
<reference key="1">
    <citation type="journal article" date="2007" name="J. Bacteriol.">
        <title>Genome sequence and analysis of the soil cellulolytic actinomycete Thermobifida fusca YX.</title>
        <authorList>
            <person name="Lykidis A."/>
            <person name="Mavromatis K."/>
            <person name="Ivanova N."/>
            <person name="Anderson I."/>
            <person name="Land M."/>
            <person name="DiBartolo G."/>
            <person name="Martinez M."/>
            <person name="Lapidus A."/>
            <person name="Lucas S."/>
            <person name="Copeland A."/>
            <person name="Richardson P."/>
            <person name="Wilson D.B."/>
            <person name="Kyrpides N."/>
        </authorList>
    </citation>
    <scope>NUCLEOTIDE SEQUENCE [LARGE SCALE GENOMIC DNA]</scope>
    <source>
        <strain>YX</strain>
    </source>
</reference>
<comment type="function">
    <text evidence="1">Catalyzes a salvage reaction resulting in the formation of AMP, that is energically less costly than de novo synthesis.</text>
</comment>
<comment type="catalytic activity">
    <reaction evidence="1">
        <text>AMP + diphosphate = 5-phospho-alpha-D-ribose 1-diphosphate + adenine</text>
        <dbReference type="Rhea" id="RHEA:16609"/>
        <dbReference type="ChEBI" id="CHEBI:16708"/>
        <dbReference type="ChEBI" id="CHEBI:33019"/>
        <dbReference type="ChEBI" id="CHEBI:58017"/>
        <dbReference type="ChEBI" id="CHEBI:456215"/>
        <dbReference type="EC" id="2.4.2.7"/>
    </reaction>
</comment>
<comment type="pathway">
    <text evidence="1">Purine metabolism; AMP biosynthesis via salvage pathway; AMP from adenine: step 1/1.</text>
</comment>
<comment type="subunit">
    <text evidence="1">Homodimer.</text>
</comment>
<comment type="subcellular location">
    <subcellularLocation>
        <location evidence="1">Cytoplasm</location>
    </subcellularLocation>
</comment>
<comment type="similarity">
    <text evidence="1">Belongs to the purine/pyrimidine phosphoribosyltransferase family.</text>
</comment>
<protein>
    <recommendedName>
        <fullName evidence="1">Adenine phosphoribosyltransferase</fullName>
        <shortName evidence="1">APRT</shortName>
        <ecNumber evidence="1">2.4.2.7</ecNumber>
    </recommendedName>
</protein>
<name>APT_THEFY</name>
<proteinExistence type="inferred from homology"/>